<feature type="chain" id="PRO_1000190396" description="ADP-L-glycero-D-manno-heptose-6-epimerase">
    <location>
        <begin position="1"/>
        <end position="330"/>
    </location>
</feature>
<feature type="active site" description="Proton acceptor" evidence="1">
    <location>
        <position position="139"/>
    </location>
</feature>
<feature type="active site" description="Proton acceptor" evidence="1">
    <location>
        <position position="177"/>
    </location>
</feature>
<feature type="binding site" evidence="1">
    <location>
        <begin position="11"/>
        <end position="12"/>
    </location>
    <ligand>
        <name>NADP(+)</name>
        <dbReference type="ChEBI" id="CHEBI:58349"/>
    </ligand>
</feature>
<feature type="binding site" evidence="1">
    <location>
        <begin position="32"/>
        <end position="33"/>
    </location>
    <ligand>
        <name>NADP(+)</name>
        <dbReference type="ChEBI" id="CHEBI:58349"/>
    </ligand>
</feature>
<feature type="binding site" evidence="1">
    <location>
        <position position="39"/>
    </location>
    <ligand>
        <name>NADP(+)</name>
        <dbReference type="ChEBI" id="CHEBI:58349"/>
    </ligand>
</feature>
<feature type="binding site" evidence="1">
    <location>
        <position position="54"/>
    </location>
    <ligand>
        <name>NADP(+)</name>
        <dbReference type="ChEBI" id="CHEBI:58349"/>
    </ligand>
</feature>
<feature type="binding site" evidence="1">
    <location>
        <begin position="75"/>
        <end position="79"/>
    </location>
    <ligand>
        <name>NADP(+)</name>
        <dbReference type="ChEBI" id="CHEBI:58349"/>
    </ligand>
</feature>
<feature type="binding site" evidence="1">
    <location>
        <position position="92"/>
    </location>
    <ligand>
        <name>NADP(+)</name>
        <dbReference type="ChEBI" id="CHEBI:58349"/>
    </ligand>
</feature>
<feature type="binding site" evidence="1">
    <location>
        <position position="143"/>
    </location>
    <ligand>
        <name>NADP(+)</name>
        <dbReference type="ChEBI" id="CHEBI:58349"/>
    </ligand>
</feature>
<feature type="binding site" evidence="1">
    <location>
        <position position="168"/>
    </location>
    <ligand>
        <name>substrate</name>
    </ligand>
</feature>
<feature type="binding site" evidence="1">
    <location>
        <position position="169"/>
    </location>
    <ligand>
        <name>NADP(+)</name>
        <dbReference type="ChEBI" id="CHEBI:58349"/>
    </ligand>
</feature>
<feature type="binding site" evidence="1">
    <location>
        <position position="177"/>
    </location>
    <ligand>
        <name>NADP(+)</name>
        <dbReference type="ChEBI" id="CHEBI:58349"/>
    </ligand>
</feature>
<feature type="binding site" evidence="1">
    <location>
        <position position="179"/>
    </location>
    <ligand>
        <name>substrate</name>
    </ligand>
</feature>
<feature type="binding site" evidence="1">
    <location>
        <position position="186"/>
    </location>
    <ligand>
        <name>substrate</name>
    </ligand>
</feature>
<feature type="binding site" evidence="1">
    <location>
        <begin position="200"/>
        <end position="203"/>
    </location>
    <ligand>
        <name>substrate</name>
    </ligand>
</feature>
<feature type="binding site" evidence="1">
    <location>
        <position position="213"/>
    </location>
    <ligand>
        <name>substrate</name>
    </ligand>
</feature>
<feature type="binding site" evidence="1">
    <location>
        <position position="292"/>
    </location>
    <ligand>
        <name>substrate</name>
    </ligand>
</feature>
<protein>
    <recommendedName>
        <fullName evidence="1">ADP-L-glycero-D-manno-heptose-6-epimerase</fullName>
        <ecNumber evidence="1">5.1.3.20</ecNumber>
    </recommendedName>
    <alternativeName>
        <fullName evidence="1">ADP-L-glycero-beta-D-manno-heptose-6-epimerase</fullName>
        <shortName evidence="1">ADP-glyceromanno-heptose 6-epimerase</shortName>
        <shortName evidence="1">ADP-hep 6-epimerase</shortName>
        <shortName evidence="1">AGME</shortName>
    </alternativeName>
</protein>
<keyword id="KW-0119">Carbohydrate metabolism</keyword>
<keyword id="KW-0413">Isomerase</keyword>
<keyword id="KW-0521">NADP</keyword>
<evidence type="ECO:0000255" key="1">
    <source>
        <dbReference type="HAMAP-Rule" id="MF_01601"/>
    </source>
</evidence>
<reference key="1">
    <citation type="submission" date="2008-02" db="EMBL/GenBank/DDBJ databases">
        <title>Complete sequence of chromosome 1 of Burkholderia cenocepacia MC0-3.</title>
        <authorList>
            <person name="Copeland A."/>
            <person name="Lucas S."/>
            <person name="Lapidus A."/>
            <person name="Barry K."/>
            <person name="Bruce D."/>
            <person name="Goodwin L."/>
            <person name="Glavina del Rio T."/>
            <person name="Dalin E."/>
            <person name="Tice H."/>
            <person name="Pitluck S."/>
            <person name="Chain P."/>
            <person name="Malfatti S."/>
            <person name="Shin M."/>
            <person name="Vergez L."/>
            <person name="Schmutz J."/>
            <person name="Larimer F."/>
            <person name="Land M."/>
            <person name="Hauser L."/>
            <person name="Kyrpides N."/>
            <person name="Mikhailova N."/>
            <person name="Tiedje J."/>
            <person name="Richardson P."/>
        </authorList>
    </citation>
    <scope>NUCLEOTIDE SEQUENCE [LARGE SCALE GENOMIC DNA]</scope>
    <source>
        <strain>MC0-3</strain>
    </source>
</reference>
<sequence>MTLIVTGAAGFIGANIVKALNERGETRIIAVDNLTRADKFRNLVDCEIDDYLDKTEFVERFARGDFGKVRAVFHEGACSDTMETDGRYMMDNNFRYSRAVLDTCLAQGTQFLYASSAAIYGGSTRFVEERDVEAPLNVYGYSKFLFDQVIRRVLPSAKSQIAGFRYFNVYGPRETHKGRMASVAFHNFNQFRAEGKVKLFGEYNGYAPGEQTRDFVSVEDVTKVNLFFFDHPEKSGIFNLGTGRAQPFNDIASTVVNTLRALDNQAPLTLAQQVEQGLIEYVPFPDALRGKYQCFTQADQTKLRAAGYDAPFLTVQEGVDRYVRWLSGQV</sequence>
<name>HLDD_BURO0</name>
<proteinExistence type="inferred from homology"/>
<organism>
    <name type="scientific">Burkholderia orbicola (strain MC0-3)</name>
    <dbReference type="NCBI Taxonomy" id="406425"/>
    <lineage>
        <taxon>Bacteria</taxon>
        <taxon>Pseudomonadati</taxon>
        <taxon>Pseudomonadota</taxon>
        <taxon>Betaproteobacteria</taxon>
        <taxon>Burkholderiales</taxon>
        <taxon>Burkholderiaceae</taxon>
        <taxon>Burkholderia</taxon>
        <taxon>Burkholderia cepacia complex</taxon>
        <taxon>Burkholderia orbicola</taxon>
    </lineage>
</organism>
<gene>
    <name evidence="1" type="primary">hldD</name>
    <name type="ordered locus">Bcenmc03_1012</name>
</gene>
<accession>B1JXS7</accession>
<comment type="function">
    <text evidence="1">Catalyzes the interconversion between ADP-D-glycero-beta-D-manno-heptose and ADP-L-glycero-beta-D-manno-heptose via an epimerization at carbon 6 of the heptose.</text>
</comment>
<comment type="catalytic activity">
    <reaction evidence="1">
        <text>ADP-D-glycero-beta-D-manno-heptose = ADP-L-glycero-beta-D-manno-heptose</text>
        <dbReference type="Rhea" id="RHEA:17577"/>
        <dbReference type="ChEBI" id="CHEBI:59967"/>
        <dbReference type="ChEBI" id="CHEBI:61506"/>
        <dbReference type="EC" id="5.1.3.20"/>
    </reaction>
</comment>
<comment type="cofactor">
    <cofactor evidence="1">
        <name>NADP(+)</name>
        <dbReference type="ChEBI" id="CHEBI:58349"/>
    </cofactor>
    <text evidence="1">Binds 1 NADP(+) per subunit.</text>
</comment>
<comment type="pathway">
    <text evidence="1">Nucleotide-sugar biosynthesis; ADP-L-glycero-beta-D-manno-heptose biosynthesis; ADP-L-glycero-beta-D-manno-heptose from D-glycero-beta-D-manno-heptose 7-phosphate: step 4/4.</text>
</comment>
<comment type="subunit">
    <text evidence="1">Homopentamer.</text>
</comment>
<comment type="domain">
    <text evidence="1">Contains a large N-terminal NADP-binding domain, and a smaller C-terminal substrate-binding domain.</text>
</comment>
<comment type="similarity">
    <text evidence="1">Belongs to the NAD(P)-dependent epimerase/dehydratase family. HldD subfamily.</text>
</comment>
<dbReference type="EC" id="5.1.3.20" evidence="1"/>
<dbReference type="EMBL" id="CP000958">
    <property type="protein sequence ID" value="ACA90189.1"/>
    <property type="molecule type" value="Genomic_DNA"/>
</dbReference>
<dbReference type="SMR" id="B1JXS7"/>
<dbReference type="GeneID" id="83047805"/>
<dbReference type="KEGG" id="bcm:Bcenmc03_1012"/>
<dbReference type="HOGENOM" id="CLU_007383_1_3_4"/>
<dbReference type="UniPathway" id="UPA00356">
    <property type="reaction ID" value="UER00440"/>
</dbReference>
<dbReference type="Proteomes" id="UP000002169">
    <property type="component" value="Chromosome 1"/>
</dbReference>
<dbReference type="GO" id="GO:0008712">
    <property type="term" value="F:ADP-glyceromanno-heptose 6-epimerase activity"/>
    <property type="evidence" value="ECO:0007669"/>
    <property type="project" value="UniProtKB-UniRule"/>
</dbReference>
<dbReference type="GO" id="GO:0050661">
    <property type="term" value="F:NADP binding"/>
    <property type="evidence" value="ECO:0007669"/>
    <property type="project" value="InterPro"/>
</dbReference>
<dbReference type="GO" id="GO:0097171">
    <property type="term" value="P:ADP-L-glycero-beta-D-manno-heptose biosynthetic process"/>
    <property type="evidence" value="ECO:0007669"/>
    <property type="project" value="UniProtKB-UniPathway"/>
</dbReference>
<dbReference type="GO" id="GO:0005975">
    <property type="term" value="P:carbohydrate metabolic process"/>
    <property type="evidence" value="ECO:0007669"/>
    <property type="project" value="UniProtKB-UniRule"/>
</dbReference>
<dbReference type="CDD" id="cd05248">
    <property type="entry name" value="ADP_GME_SDR_e"/>
    <property type="match status" value="1"/>
</dbReference>
<dbReference type="Gene3D" id="3.40.50.720">
    <property type="entry name" value="NAD(P)-binding Rossmann-like Domain"/>
    <property type="match status" value="1"/>
</dbReference>
<dbReference type="Gene3D" id="3.90.25.10">
    <property type="entry name" value="UDP-galactose 4-epimerase, domain 1"/>
    <property type="match status" value="1"/>
</dbReference>
<dbReference type="HAMAP" id="MF_01601">
    <property type="entry name" value="Heptose_epimerase"/>
    <property type="match status" value="1"/>
</dbReference>
<dbReference type="InterPro" id="IPR001509">
    <property type="entry name" value="Epimerase_deHydtase"/>
</dbReference>
<dbReference type="InterPro" id="IPR011912">
    <property type="entry name" value="Heptose_epim"/>
</dbReference>
<dbReference type="InterPro" id="IPR036291">
    <property type="entry name" value="NAD(P)-bd_dom_sf"/>
</dbReference>
<dbReference type="NCBIfam" id="TIGR02197">
    <property type="entry name" value="heptose_epim"/>
    <property type="match status" value="1"/>
</dbReference>
<dbReference type="PANTHER" id="PTHR43103:SF3">
    <property type="entry name" value="ADP-L-GLYCERO-D-MANNO-HEPTOSE-6-EPIMERASE"/>
    <property type="match status" value="1"/>
</dbReference>
<dbReference type="PANTHER" id="PTHR43103">
    <property type="entry name" value="NUCLEOSIDE-DIPHOSPHATE-SUGAR EPIMERASE"/>
    <property type="match status" value="1"/>
</dbReference>
<dbReference type="Pfam" id="PF01370">
    <property type="entry name" value="Epimerase"/>
    <property type="match status" value="1"/>
</dbReference>
<dbReference type="SUPFAM" id="SSF51735">
    <property type="entry name" value="NAD(P)-binding Rossmann-fold domains"/>
    <property type="match status" value="1"/>
</dbReference>